<proteinExistence type="evidence at protein level"/>
<reference key="1">
    <citation type="journal article" date="1998" name="DNA Res.">
        <title>Complete sequence and gene organization of the genome of a hyper-thermophilic archaebacterium, Pyrococcus horikoshii OT3.</title>
        <authorList>
            <person name="Kawarabayasi Y."/>
            <person name="Sawada M."/>
            <person name="Horikawa H."/>
            <person name="Haikawa Y."/>
            <person name="Hino Y."/>
            <person name="Yamamoto S."/>
            <person name="Sekine M."/>
            <person name="Baba S."/>
            <person name="Kosugi H."/>
            <person name="Hosoyama A."/>
            <person name="Nagai Y."/>
            <person name="Sakai M."/>
            <person name="Ogura K."/>
            <person name="Otsuka R."/>
            <person name="Nakazawa H."/>
            <person name="Takamiya M."/>
            <person name="Ohfuku Y."/>
            <person name="Funahashi T."/>
            <person name="Tanaka T."/>
            <person name="Kudoh Y."/>
            <person name="Yamazaki J."/>
            <person name="Kushida N."/>
            <person name="Oguchi A."/>
            <person name="Aoki K."/>
            <person name="Yoshizawa T."/>
            <person name="Nakamura Y."/>
            <person name="Robb F.T."/>
            <person name="Horikoshi K."/>
            <person name="Masuchi Y."/>
            <person name="Shizuya H."/>
            <person name="Kikuchi H."/>
        </authorList>
    </citation>
    <scope>NUCLEOTIDE SEQUENCE [LARGE SCALE GENOMIC DNA]</scope>
    <source>
        <strain>ATCC 700860 / DSM 12428 / JCM 9974 / NBRC 100139 / OT-3</strain>
    </source>
</reference>
<evidence type="ECO:0000250" key="1"/>
<evidence type="ECO:0000255" key="2">
    <source>
        <dbReference type="PROSITE-ProRule" id="PRU01024"/>
    </source>
</evidence>
<name>ARLMC_PYRHO</name>
<dbReference type="EC" id="2.1.1.189"/>
<dbReference type="EMBL" id="BA000001">
    <property type="protein sequence ID" value="BAA30361.1"/>
    <property type="molecule type" value="Genomic_DNA"/>
</dbReference>
<dbReference type="PIR" id="G71070">
    <property type="entry name" value="G71070"/>
</dbReference>
<dbReference type="PDB" id="8Z62">
    <property type="method" value="X-ray"/>
    <property type="resolution" value="3.20 A"/>
    <property type="chains" value="A/B=1-412"/>
</dbReference>
<dbReference type="PDBsum" id="8Z62"/>
<dbReference type="SMR" id="O58994"/>
<dbReference type="STRING" id="70601.gene:9378223"/>
<dbReference type="EnsemblBacteria" id="BAA30361">
    <property type="protein sequence ID" value="BAA30361"/>
    <property type="gene ID" value="BAA30361"/>
</dbReference>
<dbReference type="KEGG" id="pho:PH1259"/>
<dbReference type="eggNOG" id="arCOG00122">
    <property type="taxonomic scope" value="Archaea"/>
</dbReference>
<dbReference type="Proteomes" id="UP000000752">
    <property type="component" value="Chromosome"/>
</dbReference>
<dbReference type="GO" id="GO:0051539">
    <property type="term" value="F:4 iron, 4 sulfur cluster binding"/>
    <property type="evidence" value="ECO:0007669"/>
    <property type="project" value="UniProtKB-KW"/>
</dbReference>
<dbReference type="GO" id="GO:0046872">
    <property type="term" value="F:metal ion binding"/>
    <property type="evidence" value="ECO:0007669"/>
    <property type="project" value="UniProtKB-KW"/>
</dbReference>
<dbReference type="GO" id="GO:0070041">
    <property type="term" value="F:rRNA (uridine-C5-)-methyltransferase activity"/>
    <property type="evidence" value="ECO:0000250"/>
    <property type="project" value="UniProtKB"/>
</dbReference>
<dbReference type="GO" id="GO:0031167">
    <property type="term" value="P:rRNA methylation"/>
    <property type="evidence" value="ECO:0000250"/>
    <property type="project" value="UniProtKB"/>
</dbReference>
<dbReference type="CDD" id="cd02440">
    <property type="entry name" value="AdoMet_MTases"/>
    <property type="match status" value="1"/>
</dbReference>
<dbReference type="FunFam" id="2.40.50.140:FF:000439">
    <property type="entry name" value="23S rRNA (uracil(747)-C(5))-methyltransferase"/>
    <property type="match status" value="1"/>
</dbReference>
<dbReference type="Gene3D" id="2.40.50.1070">
    <property type="match status" value="1"/>
</dbReference>
<dbReference type="Gene3D" id="2.40.50.140">
    <property type="entry name" value="Nucleic acid-binding proteins"/>
    <property type="match status" value="1"/>
</dbReference>
<dbReference type="Gene3D" id="3.40.50.150">
    <property type="entry name" value="Vaccinia Virus protein VP39"/>
    <property type="match status" value="1"/>
</dbReference>
<dbReference type="InterPro" id="IPR030391">
    <property type="entry name" value="MeTrfase_TrmA_CS"/>
</dbReference>
<dbReference type="InterPro" id="IPR012340">
    <property type="entry name" value="NA-bd_OB-fold"/>
</dbReference>
<dbReference type="InterPro" id="IPR048845">
    <property type="entry name" value="RUMT_ARLMC_TRAM_dom"/>
</dbReference>
<dbReference type="InterPro" id="IPR029063">
    <property type="entry name" value="SAM-dependent_MTases_sf"/>
</dbReference>
<dbReference type="InterPro" id="IPR010280">
    <property type="entry name" value="U5_MeTrfase_fam"/>
</dbReference>
<dbReference type="NCBIfam" id="TIGR00479">
    <property type="entry name" value="rumA"/>
    <property type="match status" value="1"/>
</dbReference>
<dbReference type="PANTHER" id="PTHR11061">
    <property type="entry name" value="RNA M5U METHYLTRANSFERASE"/>
    <property type="match status" value="1"/>
</dbReference>
<dbReference type="PANTHER" id="PTHR11061:SF30">
    <property type="entry name" value="TRNA (URACIL(54)-C(5))-METHYLTRANSFERASE"/>
    <property type="match status" value="1"/>
</dbReference>
<dbReference type="Pfam" id="PF21579">
    <property type="entry name" value="PabTrmU54_TRAM_dom"/>
    <property type="match status" value="1"/>
</dbReference>
<dbReference type="Pfam" id="PF05958">
    <property type="entry name" value="tRNA_U5-meth_tr"/>
    <property type="match status" value="1"/>
</dbReference>
<dbReference type="SUPFAM" id="SSF53335">
    <property type="entry name" value="S-adenosyl-L-methionine-dependent methyltransferases"/>
    <property type="match status" value="1"/>
</dbReference>
<dbReference type="PROSITE" id="PS51687">
    <property type="entry name" value="SAM_MT_RNA_M5U"/>
    <property type="match status" value="1"/>
</dbReference>
<dbReference type="PROSITE" id="PS01231">
    <property type="entry name" value="TRMA_2"/>
    <property type="match status" value="1"/>
</dbReference>
<sequence>MEMRGKITKINENGLGVLGNILVPFAYPGDEVEVTETRERFGKIIARDFKLMTPSPLRIPGKCSHFGKCGGCLWQGLRYREQLKLKEEIFKRITGIEAEIKGSPRIWYFRNISNFIITVNGIGFKEFGMPKTVVNIRECPIFSERTPKYLKALKDFLRESNLKPWNWREGDVHYLQVREGKFTGEVMVNIIAHVPLNYREALMEAFNFADSIYWSLKADKKDDPRGFPTLVLGNEVIREKVEGITYLIHPSVFFQTNSYALPLLLKSVEKFCEGSKVLDLYSGIGTLSLYLAKRGFEVTGVEVNGTSVEMAKRSAEINSINATFIQGKAEDAELEGYETLIVDPPRKGLKEFSRRIVKKGPNTLIYVSCNPLRFILDYRNYLSEAYKVDDALLIDMFPHTPHIEAVIKLVRR</sequence>
<protein>
    <recommendedName>
        <fullName>23S rRNA (uracil(747)-C(5))-methyltransferase</fullName>
        <ecNumber>2.1.1.189</ecNumber>
    </recommendedName>
    <alternativeName>
        <fullName>23S rRNA(m5U747)-methyltransferase</fullName>
    </alternativeName>
</protein>
<comment type="function">
    <text evidence="1">Catalyzes the formation of 5-methyl-uridine at position equivalent to 747 (m5U747) in 23S rRNA.</text>
</comment>
<comment type="catalytic activity">
    <reaction>
        <text>uridine(747) in 23S rRNA + S-adenosyl-L-methionine = 5-methyluridine(747) in 23S rRNA + S-adenosyl-L-homocysteine + H(+)</text>
        <dbReference type="Rhea" id="RHEA:42628"/>
        <dbReference type="Rhea" id="RHEA-COMP:10154"/>
        <dbReference type="Rhea" id="RHEA-COMP:10155"/>
        <dbReference type="ChEBI" id="CHEBI:15378"/>
        <dbReference type="ChEBI" id="CHEBI:57856"/>
        <dbReference type="ChEBI" id="CHEBI:59789"/>
        <dbReference type="ChEBI" id="CHEBI:65315"/>
        <dbReference type="ChEBI" id="CHEBI:74447"/>
        <dbReference type="EC" id="2.1.1.189"/>
    </reaction>
</comment>
<comment type="similarity">
    <text evidence="2">Belongs to the class I-like SAM-binding methyltransferase superfamily. RNA M5U methyltransferase family.</text>
</comment>
<accession>O58994</accession>
<keyword id="KW-0002">3D-structure</keyword>
<keyword id="KW-0004">4Fe-4S</keyword>
<keyword id="KW-0408">Iron</keyword>
<keyword id="KW-0411">Iron-sulfur</keyword>
<keyword id="KW-0479">Metal-binding</keyword>
<keyword id="KW-0489">Methyltransferase</keyword>
<keyword id="KW-0698">rRNA processing</keyword>
<keyword id="KW-0949">S-adenosyl-L-methionine</keyword>
<keyword id="KW-0808">Transferase</keyword>
<gene>
    <name type="ordered locus">PH1259</name>
</gene>
<feature type="chain" id="PRO_0000162058" description="23S rRNA (uracil(747)-C(5))-methyltransferase">
    <location>
        <begin position="1"/>
        <end position="412"/>
    </location>
</feature>
<feature type="active site" description="Nucleophile" evidence="2">
    <location>
        <position position="369"/>
    </location>
</feature>
<feature type="binding site" evidence="1">
    <location>
        <position position="63"/>
    </location>
    <ligand>
        <name>[4Fe-4S] cluster</name>
        <dbReference type="ChEBI" id="CHEBI:49883"/>
    </ligand>
</feature>
<feature type="binding site" evidence="1">
    <location>
        <position position="69"/>
    </location>
    <ligand>
        <name>[4Fe-4S] cluster</name>
        <dbReference type="ChEBI" id="CHEBI:49883"/>
    </ligand>
</feature>
<feature type="binding site" evidence="1">
    <location>
        <position position="72"/>
    </location>
    <ligand>
        <name>[4Fe-4S] cluster</name>
        <dbReference type="ChEBI" id="CHEBI:49883"/>
    </ligand>
</feature>
<feature type="binding site" evidence="1">
    <location>
        <position position="139"/>
    </location>
    <ligand>
        <name>[4Fe-4S] cluster</name>
        <dbReference type="ChEBI" id="CHEBI:49883"/>
    </ligand>
</feature>
<feature type="binding site" evidence="2">
    <location>
        <position position="255"/>
    </location>
    <ligand>
        <name>S-adenosyl-L-methionine</name>
        <dbReference type="ChEBI" id="CHEBI:59789"/>
    </ligand>
</feature>
<feature type="binding site" evidence="2">
    <location>
        <position position="281"/>
    </location>
    <ligand>
        <name>S-adenosyl-L-methionine</name>
        <dbReference type="ChEBI" id="CHEBI:59789"/>
    </ligand>
</feature>
<feature type="binding site" evidence="2">
    <location>
        <position position="302"/>
    </location>
    <ligand>
        <name>S-adenosyl-L-methionine</name>
        <dbReference type="ChEBI" id="CHEBI:59789"/>
    </ligand>
</feature>
<feature type="binding site" evidence="2">
    <location>
        <position position="343"/>
    </location>
    <ligand>
        <name>S-adenosyl-L-methionine</name>
        <dbReference type="ChEBI" id="CHEBI:59789"/>
    </ligand>
</feature>
<organism>
    <name type="scientific">Pyrococcus horikoshii (strain ATCC 700860 / DSM 12428 / JCM 9974 / NBRC 100139 / OT-3)</name>
    <dbReference type="NCBI Taxonomy" id="70601"/>
    <lineage>
        <taxon>Archaea</taxon>
        <taxon>Methanobacteriati</taxon>
        <taxon>Methanobacteriota</taxon>
        <taxon>Thermococci</taxon>
        <taxon>Thermococcales</taxon>
        <taxon>Thermococcaceae</taxon>
        <taxon>Pyrococcus</taxon>
    </lineage>
</organism>